<name>HIS2_SACI1</name>
<sequence>MSNEIVDKLYKVILDRIEKRPTGSYTAEIVNKGKAYVARKVGEESVETIVASLAENKERFISEVADLIYHLLVLMALEGVTPDDIYRELERRRK</sequence>
<reference key="1">
    <citation type="journal article" date="2009" name="Proc. Natl. Acad. Sci. U.S.A.">
        <title>Biogeography of the Sulfolobus islandicus pan-genome.</title>
        <authorList>
            <person name="Reno M.L."/>
            <person name="Held N.L."/>
            <person name="Fields C.J."/>
            <person name="Burke P.V."/>
            <person name="Whitaker R.J."/>
        </authorList>
    </citation>
    <scope>NUCLEOTIDE SEQUENCE [LARGE SCALE GENOMIC DNA]</scope>
    <source>
        <strain>Y.N.15.51 / Yellowstone #2</strain>
    </source>
</reference>
<dbReference type="EC" id="3.6.1.31" evidence="1"/>
<dbReference type="EMBL" id="CP001404">
    <property type="protein sequence ID" value="ACP48393.1"/>
    <property type="molecule type" value="Genomic_DNA"/>
</dbReference>
<dbReference type="RefSeq" id="WP_012711528.1">
    <property type="nucleotide sequence ID" value="NC_012623.1"/>
</dbReference>
<dbReference type="SMR" id="C3NGY3"/>
<dbReference type="GeneID" id="84061845"/>
<dbReference type="KEGG" id="sin:YN1551_1298"/>
<dbReference type="HOGENOM" id="CLU_123337_0_0_2"/>
<dbReference type="UniPathway" id="UPA00031">
    <property type="reaction ID" value="UER00007"/>
</dbReference>
<dbReference type="Proteomes" id="UP000006818">
    <property type="component" value="Chromosome"/>
</dbReference>
<dbReference type="GO" id="GO:0005737">
    <property type="term" value="C:cytoplasm"/>
    <property type="evidence" value="ECO:0007669"/>
    <property type="project" value="UniProtKB-SubCell"/>
</dbReference>
<dbReference type="GO" id="GO:0005524">
    <property type="term" value="F:ATP binding"/>
    <property type="evidence" value="ECO:0007669"/>
    <property type="project" value="UniProtKB-KW"/>
</dbReference>
<dbReference type="GO" id="GO:0004636">
    <property type="term" value="F:phosphoribosyl-ATP diphosphatase activity"/>
    <property type="evidence" value="ECO:0007669"/>
    <property type="project" value="UniProtKB-UniRule"/>
</dbReference>
<dbReference type="GO" id="GO:0000105">
    <property type="term" value="P:L-histidine biosynthetic process"/>
    <property type="evidence" value="ECO:0007669"/>
    <property type="project" value="UniProtKB-UniRule"/>
</dbReference>
<dbReference type="CDD" id="cd11534">
    <property type="entry name" value="NTP-PPase_HisIE_like"/>
    <property type="match status" value="1"/>
</dbReference>
<dbReference type="Gene3D" id="1.10.287.1080">
    <property type="entry name" value="MazG-like"/>
    <property type="match status" value="1"/>
</dbReference>
<dbReference type="HAMAP" id="MF_01020">
    <property type="entry name" value="HisE"/>
    <property type="match status" value="1"/>
</dbReference>
<dbReference type="InterPro" id="IPR008179">
    <property type="entry name" value="HisE"/>
</dbReference>
<dbReference type="InterPro" id="IPR021130">
    <property type="entry name" value="PRib-ATP_PPHydrolase-like"/>
</dbReference>
<dbReference type="NCBIfam" id="TIGR03188">
    <property type="entry name" value="histidine_hisI"/>
    <property type="match status" value="1"/>
</dbReference>
<dbReference type="PANTHER" id="PTHR42945">
    <property type="entry name" value="HISTIDINE BIOSYNTHESIS BIFUNCTIONAL PROTEIN"/>
    <property type="match status" value="1"/>
</dbReference>
<dbReference type="PANTHER" id="PTHR42945:SF1">
    <property type="entry name" value="HISTIDINE BIOSYNTHESIS BIFUNCTIONAL PROTEIN HIS7"/>
    <property type="match status" value="1"/>
</dbReference>
<dbReference type="Pfam" id="PF01503">
    <property type="entry name" value="PRA-PH"/>
    <property type="match status" value="1"/>
</dbReference>
<dbReference type="SUPFAM" id="SSF101386">
    <property type="entry name" value="all-alpha NTP pyrophosphatases"/>
    <property type="match status" value="1"/>
</dbReference>
<accession>C3NGY3</accession>
<feature type="chain" id="PRO_1000213294" description="Phosphoribosyl-ATP pyrophosphatase">
    <location>
        <begin position="1"/>
        <end position="94"/>
    </location>
</feature>
<evidence type="ECO:0000255" key="1">
    <source>
        <dbReference type="HAMAP-Rule" id="MF_01020"/>
    </source>
</evidence>
<comment type="catalytic activity">
    <reaction evidence="1">
        <text>1-(5-phospho-beta-D-ribosyl)-ATP + H2O = 1-(5-phospho-beta-D-ribosyl)-5'-AMP + diphosphate + H(+)</text>
        <dbReference type="Rhea" id="RHEA:22828"/>
        <dbReference type="ChEBI" id="CHEBI:15377"/>
        <dbReference type="ChEBI" id="CHEBI:15378"/>
        <dbReference type="ChEBI" id="CHEBI:33019"/>
        <dbReference type="ChEBI" id="CHEBI:59457"/>
        <dbReference type="ChEBI" id="CHEBI:73183"/>
        <dbReference type="EC" id="3.6.1.31"/>
    </reaction>
</comment>
<comment type="pathway">
    <text evidence="1">Amino-acid biosynthesis; L-histidine biosynthesis; L-histidine from 5-phospho-alpha-D-ribose 1-diphosphate: step 2/9.</text>
</comment>
<comment type="subcellular location">
    <subcellularLocation>
        <location evidence="1">Cytoplasm</location>
    </subcellularLocation>
</comment>
<comment type="similarity">
    <text evidence="1">Belongs to the PRA-PH family.</text>
</comment>
<keyword id="KW-0028">Amino-acid biosynthesis</keyword>
<keyword id="KW-0067">ATP-binding</keyword>
<keyword id="KW-0963">Cytoplasm</keyword>
<keyword id="KW-0368">Histidine biosynthesis</keyword>
<keyword id="KW-0378">Hydrolase</keyword>
<keyword id="KW-0547">Nucleotide-binding</keyword>
<gene>
    <name evidence="1" type="primary">hisE</name>
    <name type="ordered locus">YN1551_1298</name>
</gene>
<protein>
    <recommendedName>
        <fullName evidence="1">Phosphoribosyl-ATP pyrophosphatase</fullName>
        <shortName evidence="1">PRA-PH</shortName>
        <ecNumber evidence="1">3.6.1.31</ecNumber>
    </recommendedName>
</protein>
<organism>
    <name type="scientific">Saccharolobus islandicus (strain Y.N.15.51 / Yellowstone #2)</name>
    <name type="common">Sulfolobus islandicus</name>
    <dbReference type="NCBI Taxonomy" id="419942"/>
    <lineage>
        <taxon>Archaea</taxon>
        <taxon>Thermoproteota</taxon>
        <taxon>Thermoprotei</taxon>
        <taxon>Sulfolobales</taxon>
        <taxon>Sulfolobaceae</taxon>
        <taxon>Saccharolobus</taxon>
    </lineage>
</organism>
<proteinExistence type="inferred from homology"/>